<gene>
    <name type="ordered locus">BAB1_1729</name>
</gene>
<reference key="1">
    <citation type="journal article" date="2005" name="Infect. Immun.">
        <title>Whole-genome analyses of speciation events in pathogenic Brucellae.</title>
        <authorList>
            <person name="Chain P.S."/>
            <person name="Comerci D.J."/>
            <person name="Tolmasky M.E."/>
            <person name="Larimer F.W."/>
            <person name="Malfatti S.A."/>
            <person name="Vergez L.M."/>
            <person name="Aguero F."/>
            <person name="Land M.L."/>
            <person name="Ugalde R.A."/>
            <person name="Garcia E."/>
        </authorList>
    </citation>
    <scope>NUCLEOTIDE SEQUENCE [LARGE SCALE GENOMIC DNA]</scope>
    <source>
        <strain>2308</strain>
    </source>
</reference>
<sequence length="248" mass="26949">MAGHSQFKNIMHRKGRQDAVRSKMFSKLAREITVAAKQGLPDPAMNPRLRLAIQNAKAQSMPKDNIERAIKKAAGNDGENYDEVRYEGRGPGGVSVIVEALTDNRNRTASNVRAAFTKSGGSLGETGSVSFMFDRVGEIVYKPEAGDADKVMEAAIEAGAEDVQSGEDGHVILCAFEDIGEVSKALEAALGEAESIKTIWKPQTNTELDEEKARSVLKLLSVLEDDDDVQNVYTNFEVSDEVMEKLSA</sequence>
<keyword id="KW-0963">Cytoplasm</keyword>
<keyword id="KW-0238">DNA-binding</keyword>
<keyword id="KW-1185">Reference proteome</keyword>
<keyword id="KW-0804">Transcription</keyword>
<keyword id="KW-0805">Transcription regulation</keyword>
<protein>
    <recommendedName>
        <fullName evidence="1">Probable transcriptional regulatory protein BAB1_1729</fullName>
    </recommendedName>
</protein>
<evidence type="ECO:0000255" key="1">
    <source>
        <dbReference type="HAMAP-Rule" id="MF_00693"/>
    </source>
</evidence>
<organism>
    <name type="scientific">Brucella abortus (strain 2308)</name>
    <dbReference type="NCBI Taxonomy" id="359391"/>
    <lineage>
        <taxon>Bacteria</taxon>
        <taxon>Pseudomonadati</taxon>
        <taxon>Pseudomonadota</taxon>
        <taxon>Alphaproteobacteria</taxon>
        <taxon>Hyphomicrobiales</taxon>
        <taxon>Brucellaceae</taxon>
        <taxon>Brucella/Ochrobactrum group</taxon>
        <taxon>Brucella</taxon>
    </lineage>
</organism>
<name>Y1729_BRUA2</name>
<feature type="chain" id="PRO_0000257035" description="Probable transcriptional regulatory protein BAB1_1729">
    <location>
        <begin position="1"/>
        <end position="248"/>
    </location>
</feature>
<accession>Q2YRF2</accession>
<dbReference type="EMBL" id="AM040264">
    <property type="protein sequence ID" value="CAJ11685.1"/>
    <property type="molecule type" value="Genomic_DNA"/>
</dbReference>
<dbReference type="RefSeq" id="WP_002964805.1">
    <property type="nucleotide sequence ID" value="NZ_KN046823.1"/>
</dbReference>
<dbReference type="SMR" id="Q2YRF2"/>
<dbReference type="STRING" id="359391.BAB1_1729"/>
<dbReference type="KEGG" id="bmf:BAB1_1729"/>
<dbReference type="PATRIC" id="fig|359391.11.peg.242"/>
<dbReference type="HOGENOM" id="CLU_062974_2_2_5"/>
<dbReference type="PhylomeDB" id="Q2YRF2"/>
<dbReference type="Proteomes" id="UP000002719">
    <property type="component" value="Chromosome I"/>
</dbReference>
<dbReference type="GO" id="GO:0005829">
    <property type="term" value="C:cytosol"/>
    <property type="evidence" value="ECO:0007669"/>
    <property type="project" value="TreeGrafter"/>
</dbReference>
<dbReference type="GO" id="GO:0003677">
    <property type="term" value="F:DNA binding"/>
    <property type="evidence" value="ECO:0007669"/>
    <property type="project" value="UniProtKB-UniRule"/>
</dbReference>
<dbReference type="GO" id="GO:0006355">
    <property type="term" value="P:regulation of DNA-templated transcription"/>
    <property type="evidence" value="ECO:0007669"/>
    <property type="project" value="UniProtKB-UniRule"/>
</dbReference>
<dbReference type="FunFam" id="1.10.10.200:FF:000002">
    <property type="entry name" value="Probable transcriptional regulatory protein CLM62_37755"/>
    <property type="match status" value="1"/>
</dbReference>
<dbReference type="Gene3D" id="1.10.10.200">
    <property type="match status" value="1"/>
</dbReference>
<dbReference type="Gene3D" id="3.30.70.980">
    <property type="match status" value="2"/>
</dbReference>
<dbReference type="HAMAP" id="MF_00693">
    <property type="entry name" value="Transcrip_reg_TACO1"/>
    <property type="match status" value="1"/>
</dbReference>
<dbReference type="InterPro" id="IPR017856">
    <property type="entry name" value="Integrase-like_N"/>
</dbReference>
<dbReference type="InterPro" id="IPR048300">
    <property type="entry name" value="TACO1_YebC-like_2nd/3rd_dom"/>
</dbReference>
<dbReference type="InterPro" id="IPR049083">
    <property type="entry name" value="TACO1_YebC_N"/>
</dbReference>
<dbReference type="InterPro" id="IPR002876">
    <property type="entry name" value="Transcrip_reg_TACO1-like"/>
</dbReference>
<dbReference type="InterPro" id="IPR026564">
    <property type="entry name" value="Transcrip_reg_TACO1-like_dom3"/>
</dbReference>
<dbReference type="InterPro" id="IPR029072">
    <property type="entry name" value="YebC-like"/>
</dbReference>
<dbReference type="NCBIfam" id="NF001030">
    <property type="entry name" value="PRK00110.1"/>
    <property type="match status" value="1"/>
</dbReference>
<dbReference type="NCBIfam" id="NF009044">
    <property type="entry name" value="PRK12378.1"/>
    <property type="match status" value="1"/>
</dbReference>
<dbReference type="NCBIfam" id="TIGR01033">
    <property type="entry name" value="YebC/PmpR family DNA-binding transcriptional regulator"/>
    <property type="match status" value="1"/>
</dbReference>
<dbReference type="PANTHER" id="PTHR12532:SF6">
    <property type="entry name" value="TRANSCRIPTIONAL REGULATORY PROTEIN YEBC-RELATED"/>
    <property type="match status" value="1"/>
</dbReference>
<dbReference type="PANTHER" id="PTHR12532">
    <property type="entry name" value="TRANSLATIONAL ACTIVATOR OF CYTOCHROME C OXIDASE 1"/>
    <property type="match status" value="1"/>
</dbReference>
<dbReference type="Pfam" id="PF20772">
    <property type="entry name" value="TACO1_YebC_N"/>
    <property type="match status" value="1"/>
</dbReference>
<dbReference type="Pfam" id="PF01709">
    <property type="entry name" value="Transcrip_reg"/>
    <property type="match status" value="1"/>
</dbReference>
<dbReference type="SUPFAM" id="SSF75625">
    <property type="entry name" value="YebC-like"/>
    <property type="match status" value="1"/>
</dbReference>
<comment type="subcellular location">
    <subcellularLocation>
        <location evidence="1">Cytoplasm</location>
    </subcellularLocation>
</comment>
<comment type="similarity">
    <text evidence="1">Belongs to the TACO1 family.</text>
</comment>
<proteinExistence type="inferred from homology"/>